<evidence type="ECO:0000255" key="1">
    <source>
        <dbReference type="HAMAP-Rule" id="MF_00098"/>
    </source>
</evidence>
<gene>
    <name evidence="1" type="primary">metG</name>
    <name type="ordered locus">BP0180</name>
</gene>
<sequence length="692" mass="76500">MSRTLFVTTALPYANGSFHIGHIMEYIQADIWVRSMRMAGHTVHFVGADDAHGAPIMLKAEKEGITPQALVARYAAERPRYLDGFHIRFDHWHSTDTPENVALSQEIYRALKSEGLIETRSIEQFYDPVKGMFLADRYIKGECPRCHAKDQYGDSCEVCGAVYAPTELINPYSALTGAAPVLKSSDHFFFKLSDPRCVEFLQQWTTGANRQGVKHLQAEVQAKTREWLVGDDGEAKLGDWDISRDAPYFGIEIPDAPGKYFYVWLDAPVGYLASLKSYCAAKGLDFDALLDPAGPTEQVHFIGKDIIYFHALFWPAMLKFAGRKTPDQLNVHGFITVSGEKMSKSRGTGISPLRYLEIGMDAEWLRYYMAAKLNARVEDMDFNPEDFVARVNSDLVGKYVNIASRAAAFITRHFDGELAYDGDTDALAAEFAQQAESIRAAFEAREYNRAVREIMAHADRINQAFDAAQPWVMAKGIGAADAATRARLQDICSRALAGFKALSVMLAPVLPALASRVARELFGANADFAWGDAQQLPQRVAPFKHLMQRVDPKLLDDLFEPPAAEASAPAALPGGEALADTITIDDFAKIDLRIARIVNCEEVEGSTKLLRLTLDVGEGRHRNVFSGIKSAYQPQDLVGKLTVLVANLAPRKMKFGVSEGMVLAASHADEKAEPGIYVLEPWPGAQPGMRVR</sequence>
<feature type="chain" id="PRO_0000139110" description="Methionine--tRNA ligase">
    <location>
        <begin position="1"/>
        <end position="692"/>
    </location>
</feature>
<feature type="domain" description="tRNA-binding" evidence="1">
    <location>
        <begin position="586"/>
        <end position="692"/>
    </location>
</feature>
<feature type="short sequence motif" description="'HIGH' region">
    <location>
        <begin position="12"/>
        <end position="22"/>
    </location>
</feature>
<feature type="short sequence motif" description="'KMSKS' region">
    <location>
        <begin position="341"/>
        <end position="345"/>
    </location>
</feature>
<feature type="binding site" evidence="1">
    <location>
        <position position="143"/>
    </location>
    <ligand>
        <name>Zn(2+)</name>
        <dbReference type="ChEBI" id="CHEBI:29105"/>
    </ligand>
</feature>
<feature type="binding site" evidence="1">
    <location>
        <position position="146"/>
    </location>
    <ligand>
        <name>Zn(2+)</name>
        <dbReference type="ChEBI" id="CHEBI:29105"/>
    </ligand>
</feature>
<feature type="binding site" evidence="1">
    <location>
        <position position="156"/>
    </location>
    <ligand>
        <name>Zn(2+)</name>
        <dbReference type="ChEBI" id="CHEBI:29105"/>
    </ligand>
</feature>
<feature type="binding site" evidence="1">
    <location>
        <position position="159"/>
    </location>
    <ligand>
        <name>Zn(2+)</name>
        <dbReference type="ChEBI" id="CHEBI:29105"/>
    </ligand>
</feature>
<feature type="binding site" evidence="1">
    <location>
        <position position="344"/>
    </location>
    <ligand>
        <name>ATP</name>
        <dbReference type="ChEBI" id="CHEBI:30616"/>
    </ligand>
</feature>
<organism>
    <name type="scientific">Bordetella pertussis (strain Tohama I / ATCC BAA-589 / NCTC 13251)</name>
    <dbReference type="NCBI Taxonomy" id="257313"/>
    <lineage>
        <taxon>Bacteria</taxon>
        <taxon>Pseudomonadati</taxon>
        <taxon>Pseudomonadota</taxon>
        <taxon>Betaproteobacteria</taxon>
        <taxon>Burkholderiales</taxon>
        <taxon>Alcaligenaceae</taxon>
        <taxon>Bordetella</taxon>
    </lineage>
</organism>
<proteinExistence type="inferred from homology"/>
<protein>
    <recommendedName>
        <fullName evidence="1">Methionine--tRNA ligase</fullName>
        <ecNumber evidence="1">6.1.1.10</ecNumber>
    </recommendedName>
    <alternativeName>
        <fullName evidence="1">Methionyl-tRNA synthetase</fullName>
        <shortName evidence="1">MetRS</shortName>
    </alternativeName>
</protein>
<dbReference type="EC" id="6.1.1.10" evidence="1"/>
<dbReference type="EMBL" id="BX640411">
    <property type="protein sequence ID" value="CAE40559.1"/>
    <property type="molecule type" value="Genomic_DNA"/>
</dbReference>
<dbReference type="RefSeq" id="NP_879070.1">
    <property type="nucleotide sequence ID" value="NC_002929.2"/>
</dbReference>
<dbReference type="RefSeq" id="WP_010929666.1">
    <property type="nucleotide sequence ID" value="NZ_CP039022.1"/>
</dbReference>
<dbReference type="SMR" id="Q7W0F7"/>
<dbReference type="STRING" id="257313.BP0180"/>
<dbReference type="PaxDb" id="257313-BP0180"/>
<dbReference type="GeneID" id="69603563"/>
<dbReference type="KEGG" id="bpe:BP0180"/>
<dbReference type="PATRIC" id="fig|257313.5.peg.190"/>
<dbReference type="eggNOG" id="COG0073">
    <property type="taxonomic scope" value="Bacteria"/>
</dbReference>
<dbReference type="eggNOG" id="COG0143">
    <property type="taxonomic scope" value="Bacteria"/>
</dbReference>
<dbReference type="HOGENOM" id="CLU_009710_7_0_4"/>
<dbReference type="Proteomes" id="UP000002676">
    <property type="component" value="Chromosome"/>
</dbReference>
<dbReference type="GO" id="GO:0005829">
    <property type="term" value="C:cytosol"/>
    <property type="evidence" value="ECO:0007669"/>
    <property type="project" value="TreeGrafter"/>
</dbReference>
<dbReference type="GO" id="GO:0005524">
    <property type="term" value="F:ATP binding"/>
    <property type="evidence" value="ECO:0007669"/>
    <property type="project" value="UniProtKB-UniRule"/>
</dbReference>
<dbReference type="GO" id="GO:0046872">
    <property type="term" value="F:metal ion binding"/>
    <property type="evidence" value="ECO:0007669"/>
    <property type="project" value="UniProtKB-KW"/>
</dbReference>
<dbReference type="GO" id="GO:0004825">
    <property type="term" value="F:methionine-tRNA ligase activity"/>
    <property type="evidence" value="ECO:0007669"/>
    <property type="project" value="UniProtKB-UniRule"/>
</dbReference>
<dbReference type="GO" id="GO:0000049">
    <property type="term" value="F:tRNA binding"/>
    <property type="evidence" value="ECO:0007669"/>
    <property type="project" value="UniProtKB-KW"/>
</dbReference>
<dbReference type="GO" id="GO:0006431">
    <property type="term" value="P:methionyl-tRNA aminoacylation"/>
    <property type="evidence" value="ECO:0007669"/>
    <property type="project" value="UniProtKB-UniRule"/>
</dbReference>
<dbReference type="CDD" id="cd07957">
    <property type="entry name" value="Anticodon_Ia_Met"/>
    <property type="match status" value="1"/>
</dbReference>
<dbReference type="CDD" id="cd00814">
    <property type="entry name" value="MetRS_core"/>
    <property type="match status" value="1"/>
</dbReference>
<dbReference type="CDD" id="cd02800">
    <property type="entry name" value="tRNA_bind_EcMetRS_like"/>
    <property type="match status" value="1"/>
</dbReference>
<dbReference type="FunFam" id="2.20.28.20:FF:000001">
    <property type="entry name" value="Methionine--tRNA ligase"/>
    <property type="match status" value="1"/>
</dbReference>
<dbReference type="FunFam" id="2.40.50.140:FF:000042">
    <property type="entry name" value="Methionine--tRNA ligase"/>
    <property type="match status" value="1"/>
</dbReference>
<dbReference type="Gene3D" id="3.40.50.620">
    <property type="entry name" value="HUPs"/>
    <property type="match status" value="1"/>
</dbReference>
<dbReference type="Gene3D" id="1.10.730.10">
    <property type="entry name" value="Isoleucyl-tRNA Synthetase, Domain 1"/>
    <property type="match status" value="1"/>
</dbReference>
<dbReference type="Gene3D" id="2.20.28.20">
    <property type="entry name" value="Methionyl-tRNA synthetase, Zn-domain"/>
    <property type="match status" value="1"/>
</dbReference>
<dbReference type="Gene3D" id="2.40.50.140">
    <property type="entry name" value="Nucleic acid-binding proteins"/>
    <property type="match status" value="1"/>
</dbReference>
<dbReference type="HAMAP" id="MF_00098">
    <property type="entry name" value="Met_tRNA_synth_type1"/>
    <property type="match status" value="1"/>
</dbReference>
<dbReference type="InterPro" id="IPR001412">
    <property type="entry name" value="aa-tRNA-synth_I_CS"/>
</dbReference>
<dbReference type="InterPro" id="IPR041872">
    <property type="entry name" value="Anticodon_Met"/>
</dbReference>
<dbReference type="InterPro" id="IPR004495">
    <property type="entry name" value="Met-tRNA-synth_bsu_C"/>
</dbReference>
<dbReference type="InterPro" id="IPR023458">
    <property type="entry name" value="Met-tRNA_ligase_1"/>
</dbReference>
<dbReference type="InterPro" id="IPR014758">
    <property type="entry name" value="Met-tRNA_synth"/>
</dbReference>
<dbReference type="InterPro" id="IPR015413">
    <property type="entry name" value="Methionyl/Leucyl_tRNA_Synth"/>
</dbReference>
<dbReference type="InterPro" id="IPR033911">
    <property type="entry name" value="MetRS_core"/>
</dbReference>
<dbReference type="InterPro" id="IPR029038">
    <property type="entry name" value="MetRS_Zn"/>
</dbReference>
<dbReference type="InterPro" id="IPR012340">
    <property type="entry name" value="NA-bd_OB-fold"/>
</dbReference>
<dbReference type="InterPro" id="IPR014729">
    <property type="entry name" value="Rossmann-like_a/b/a_fold"/>
</dbReference>
<dbReference type="InterPro" id="IPR002547">
    <property type="entry name" value="tRNA-bd_dom"/>
</dbReference>
<dbReference type="InterPro" id="IPR009080">
    <property type="entry name" value="tRNAsynth_Ia_anticodon-bd"/>
</dbReference>
<dbReference type="NCBIfam" id="TIGR00398">
    <property type="entry name" value="metG"/>
    <property type="match status" value="1"/>
</dbReference>
<dbReference type="NCBIfam" id="TIGR00399">
    <property type="entry name" value="metG_C_term"/>
    <property type="match status" value="1"/>
</dbReference>
<dbReference type="NCBIfam" id="NF001100">
    <property type="entry name" value="PRK00133.1"/>
    <property type="match status" value="1"/>
</dbReference>
<dbReference type="PANTHER" id="PTHR45765">
    <property type="entry name" value="METHIONINE--TRNA LIGASE"/>
    <property type="match status" value="1"/>
</dbReference>
<dbReference type="PANTHER" id="PTHR45765:SF1">
    <property type="entry name" value="METHIONINE--TRNA LIGASE, CYTOPLASMIC"/>
    <property type="match status" value="1"/>
</dbReference>
<dbReference type="Pfam" id="PF09334">
    <property type="entry name" value="tRNA-synt_1g"/>
    <property type="match status" value="1"/>
</dbReference>
<dbReference type="Pfam" id="PF01588">
    <property type="entry name" value="tRNA_bind"/>
    <property type="match status" value="1"/>
</dbReference>
<dbReference type="PRINTS" id="PR01041">
    <property type="entry name" value="TRNASYNTHMET"/>
</dbReference>
<dbReference type="SUPFAM" id="SSF47323">
    <property type="entry name" value="Anticodon-binding domain of a subclass of class I aminoacyl-tRNA synthetases"/>
    <property type="match status" value="1"/>
</dbReference>
<dbReference type="SUPFAM" id="SSF57770">
    <property type="entry name" value="Methionyl-tRNA synthetase (MetRS), Zn-domain"/>
    <property type="match status" value="1"/>
</dbReference>
<dbReference type="SUPFAM" id="SSF50249">
    <property type="entry name" value="Nucleic acid-binding proteins"/>
    <property type="match status" value="1"/>
</dbReference>
<dbReference type="SUPFAM" id="SSF52374">
    <property type="entry name" value="Nucleotidylyl transferase"/>
    <property type="match status" value="1"/>
</dbReference>
<dbReference type="PROSITE" id="PS00178">
    <property type="entry name" value="AA_TRNA_LIGASE_I"/>
    <property type="match status" value="1"/>
</dbReference>
<dbReference type="PROSITE" id="PS50886">
    <property type="entry name" value="TRBD"/>
    <property type="match status" value="1"/>
</dbReference>
<keyword id="KW-0030">Aminoacyl-tRNA synthetase</keyword>
<keyword id="KW-0067">ATP-binding</keyword>
<keyword id="KW-0963">Cytoplasm</keyword>
<keyword id="KW-0436">Ligase</keyword>
<keyword id="KW-0479">Metal-binding</keyword>
<keyword id="KW-0547">Nucleotide-binding</keyword>
<keyword id="KW-0648">Protein biosynthesis</keyword>
<keyword id="KW-1185">Reference proteome</keyword>
<keyword id="KW-0694">RNA-binding</keyword>
<keyword id="KW-0820">tRNA-binding</keyword>
<keyword id="KW-0862">Zinc</keyword>
<comment type="function">
    <text evidence="1">Is required not only for elongation of protein synthesis but also for the initiation of all mRNA translation through initiator tRNA(fMet) aminoacylation.</text>
</comment>
<comment type="catalytic activity">
    <reaction evidence="1">
        <text>tRNA(Met) + L-methionine + ATP = L-methionyl-tRNA(Met) + AMP + diphosphate</text>
        <dbReference type="Rhea" id="RHEA:13481"/>
        <dbReference type="Rhea" id="RHEA-COMP:9667"/>
        <dbReference type="Rhea" id="RHEA-COMP:9698"/>
        <dbReference type="ChEBI" id="CHEBI:30616"/>
        <dbReference type="ChEBI" id="CHEBI:33019"/>
        <dbReference type="ChEBI" id="CHEBI:57844"/>
        <dbReference type="ChEBI" id="CHEBI:78442"/>
        <dbReference type="ChEBI" id="CHEBI:78530"/>
        <dbReference type="ChEBI" id="CHEBI:456215"/>
        <dbReference type="EC" id="6.1.1.10"/>
    </reaction>
</comment>
<comment type="cofactor">
    <cofactor evidence="1">
        <name>Zn(2+)</name>
        <dbReference type="ChEBI" id="CHEBI:29105"/>
    </cofactor>
    <text evidence="1">Binds 1 zinc ion per subunit.</text>
</comment>
<comment type="subunit">
    <text evidence="1">Homodimer.</text>
</comment>
<comment type="subcellular location">
    <subcellularLocation>
        <location evidence="1">Cytoplasm</location>
    </subcellularLocation>
</comment>
<comment type="similarity">
    <text evidence="1">Belongs to the class-I aminoacyl-tRNA synthetase family. MetG type 1 subfamily.</text>
</comment>
<reference key="1">
    <citation type="journal article" date="2003" name="Nat. Genet.">
        <title>Comparative analysis of the genome sequences of Bordetella pertussis, Bordetella parapertussis and Bordetella bronchiseptica.</title>
        <authorList>
            <person name="Parkhill J."/>
            <person name="Sebaihia M."/>
            <person name="Preston A."/>
            <person name="Murphy L.D."/>
            <person name="Thomson N.R."/>
            <person name="Harris D.E."/>
            <person name="Holden M.T.G."/>
            <person name="Churcher C.M."/>
            <person name="Bentley S.D."/>
            <person name="Mungall K.L."/>
            <person name="Cerdeno-Tarraga A.-M."/>
            <person name="Temple L."/>
            <person name="James K.D."/>
            <person name="Harris B."/>
            <person name="Quail M.A."/>
            <person name="Achtman M."/>
            <person name="Atkin R."/>
            <person name="Baker S."/>
            <person name="Basham D."/>
            <person name="Bason N."/>
            <person name="Cherevach I."/>
            <person name="Chillingworth T."/>
            <person name="Collins M."/>
            <person name="Cronin A."/>
            <person name="Davis P."/>
            <person name="Doggett J."/>
            <person name="Feltwell T."/>
            <person name="Goble A."/>
            <person name="Hamlin N."/>
            <person name="Hauser H."/>
            <person name="Holroyd S."/>
            <person name="Jagels K."/>
            <person name="Leather S."/>
            <person name="Moule S."/>
            <person name="Norberczak H."/>
            <person name="O'Neil S."/>
            <person name="Ormond D."/>
            <person name="Price C."/>
            <person name="Rabbinowitsch E."/>
            <person name="Rutter S."/>
            <person name="Sanders M."/>
            <person name="Saunders D."/>
            <person name="Seeger K."/>
            <person name="Sharp S."/>
            <person name="Simmonds M."/>
            <person name="Skelton J."/>
            <person name="Squares R."/>
            <person name="Squares S."/>
            <person name="Stevens K."/>
            <person name="Unwin L."/>
            <person name="Whitehead S."/>
            <person name="Barrell B.G."/>
            <person name="Maskell D.J."/>
        </authorList>
    </citation>
    <scope>NUCLEOTIDE SEQUENCE [LARGE SCALE GENOMIC DNA]</scope>
    <source>
        <strain>Tohama I / ATCC BAA-589 / NCTC 13251</strain>
    </source>
</reference>
<name>SYM_BORPE</name>
<accession>Q7W0F7</accession>